<gene>
    <name evidence="1" type="primary">atpE</name>
    <name type="ordered locus">SO_4752</name>
</gene>
<dbReference type="EMBL" id="AE014299">
    <property type="protein sequence ID" value="AAN57711.1"/>
    <property type="molecule type" value="Genomic_DNA"/>
</dbReference>
<dbReference type="RefSeq" id="NP_720268.1">
    <property type="nucleotide sequence ID" value="NC_004347.2"/>
</dbReference>
<dbReference type="RefSeq" id="WP_006083840.1">
    <property type="nucleotide sequence ID" value="NZ_CP053946.1"/>
</dbReference>
<dbReference type="SMR" id="Q8E8B5"/>
<dbReference type="STRING" id="211586.SO_4752"/>
<dbReference type="PaxDb" id="211586-SO_4752"/>
<dbReference type="GeneID" id="94725963"/>
<dbReference type="KEGG" id="son:SO_4752"/>
<dbReference type="PATRIC" id="fig|211586.12.peg.4609"/>
<dbReference type="eggNOG" id="ENOG5032S3K">
    <property type="taxonomic scope" value="Bacteria"/>
</dbReference>
<dbReference type="HOGENOM" id="CLU_148047_1_0_6"/>
<dbReference type="OrthoDB" id="9811659at2"/>
<dbReference type="PhylomeDB" id="Q8E8B5"/>
<dbReference type="BioCyc" id="SONE211586:G1GMP-4397-MONOMER"/>
<dbReference type="PRO" id="PR:Q8E8B5"/>
<dbReference type="Proteomes" id="UP000008186">
    <property type="component" value="Chromosome"/>
</dbReference>
<dbReference type="GO" id="GO:0005886">
    <property type="term" value="C:plasma membrane"/>
    <property type="evidence" value="ECO:0007669"/>
    <property type="project" value="UniProtKB-SubCell"/>
</dbReference>
<dbReference type="GO" id="GO:0045259">
    <property type="term" value="C:proton-transporting ATP synthase complex"/>
    <property type="evidence" value="ECO:0007669"/>
    <property type="project" value="UniProtKB-KW"/>
</dbReference>
<dbReference type="GO" id="GO:0033177">
    <property type="term" value="C:proton-transporting two-sector ATPase complex, proton-transporting domain"/>
    <property type="evidence" value="ECO:0007669"/>
    <property type="project" value="InterPro"/>
</dbReference>
<dbReference type="GO" id="GO:0008289">
    <property type="term" value="F:lipid binding"/>
    <property type="evidence" value="ECO:0007669"/>
    <property type="project" value="UniProtKB-KW"/>
</dbReference>
<dbReference type="GO" id="GO:0046933">
    <property type="term" value="F:proton-transporting ATP synthase activity, rotational mechanism"/>
    <property type="evidence" value="ECO:0007669"/>
    <property type="project" value="UniProtKB-UniRule"/>
</dbReference>
<dbReference type="GO" id="GO:0015986">
    <property type="term" value="P:proton motive force-driven ATP synthesis"/>
    <property type="evidence" value="ECO:0000318"/>
    <property type="project" value="GO_Central"/>
</dbReference>
<dbReference type="CDD" id="cd18185">
    <property type="entry name" value="ATP-synt_Fo_c_ATPE"/>
    <property type="match status" value="1"/>
</dbReference>
<dbReference type="FunFam" id="1.20.20.10:FF:000002">
    <property type="entry name" value="ATP synthase subunit c"/>
    <property type="match status" value="1"/>
</dbReference>
<dbReference type="Gene3D" id="1.20.20.10">
    <property type="entry name" value="F1F0 ATP synthase subunit C"/>
    <property type="match status" value="1"/>
</dbReference>
<dbReference type="HAMAP" id="MF_01396">
    <property type="entry name" value="ATP_synth_c_bact"/>
    <property type="match status" value="1"/>
</dbReference>
<dbReference type="InterPro" id="IPR005953">
    <property type="entry name" value="ATP_synth_csu_bac/chlpt"/>
</dbReference>
<dbReference type="InterPro" id="IPR000454">
    <property type="entry name" value="ATP_synth_F0_csu"/>
</dbReference>
<dbReference type="InterPro" id="IPR020537">
    <property type="entry name" value="ATP_synth_F0_csu_DDCD_BS"/>
</dbReference>
<dbReference type="InterPro" id="IPR038662">
    <property type="entry name" value="ATP_synth_F0_csu_sf"/>
</dbReference>
<dbReference type="InterPro" id="IPR002379">
    <property type="entry name" value="ATPase_proteolipid_c-like_dom"/>
</dbReference>
<dbReference type="InterPro" id="IPR035921">
    <property type="entry name" value="F/V-ATP_Csub_sf"/>
</dbReference>
<dbReference type="NCBIfam" id="TIGR01260">
    <property type="entry name" value="ATP_synt_c"/>
    <property type="match status" value="1"/>
</dbReference>
<dbReference type="NCBIfam" id="NF005363">
    <property type="entry name" value="PRK06876.1"/>
    <property type="match status" value="1"/>
</dbReference>
<dbReference type="Pfam" id="PF00137">
    <property type="entry name" value="ATP-synt_C"/>
    <property type="match status" value="1"/>
</dbReference>
<dbReference type="PRINTS" id="PR00124">
    <property type="entry name" value="ATPASEC"/>
</dbReference>
<dbReference type="SUPFAM" id="SSF81333">
    <property type="entry name" value="F1F0 ATP synthase subunit C"/>
    <property type="match status" value="1"/>
</dbReference>
<dbReference type="PROSITE" id="PS00605">
    <property type="entry name" value="ATPASE_C"/>
    <property type="match status" value="1"/>
</dbReference>
<reference key="1">
    <citation type="journal article" date="2002" name="Nat. Biotechnol.">
        <title>Genome sequence of the dissimilatory metal ion-reducing bacterium Shewanella oneidensis.</title>
        <authorList>
            <person name="Heidelberg J.F."/>
            <person name="Paulsen I.T."/>
            <person name="Nelson K.E."/>
            <person name="Gaidos E.J."/>
            <person name="Nelson W.C."/>
            <person name="Read T.D."/>
            <person name="Eisen J.A."/>
            <person name="Seshadri R."/>
            <person name="Ward N.L."/>
            <person name="Methe B.A."/>
            <person name="Clayton R.A."/>
            <person name="Meyer T."/>
            <person name="Tsapin A."/>
            <person name="Scott J."/>
            <person name="Beanan M.J."/>
            <person name="Brinkac L.M."/>
            <person name="Daugherty S.C."/>
            <person name="DeBoy R.T."/>
            <person name="Dodson R.J."/>
            <person name="Durkin A.S."/>
            <person name="Haft D.H."/>
            <person name="Kolonay J.F."/>
            <person name="Madupu R."/>
            <person name="Peterson J.D."/>
            <person name="Umayam L.A."/>
            <person name="White O."/>
            <person name="Wolf A.M."/>
            <person name="Vamathevan J.J."/>
            <person name="Weidman J.F."/>
            <person name="Impraim M."/>
            <person name="Lee K."/>
            <person name="Berry K.J."/>
            <person name="Lee C."/>
            <person name="Mueller J."/>
            <person name="Khouri H.M."/>
            <person name="Gill J."/>
            <person name="Utterback T.R."/>
            <person name="McDonald L.A."/>
            <person name="Feldblyum T.V."/>
            <person name="Smith H.O."/>
            <person name="Venter J.C."/>
            <person name="Nealson K.H."/>
            <person name="Fraser C.M."/>
        </authorList>
    </citation>
    <scope>NUCLEOTIDE SEQUENCE [LARGE SCALE GENOMIC DNA]</scope>
    <source>
        <strain>ATCC 700550 / JCM 31522 / CIP 106686 / LMG 19005 / NCIMB 14063 / MR-1</strain>
    </source>
</reference>
<sequence>METILGMTAIAVALLIGMGALGTAIGFGLLGGKFLEGAARQPEMAPMLQVKMFIVAGLLDAVTMIGVGIALFMLFTNPLGAML</sequence>
<accession>Q8E8B5</accession>
<organism>
    <name type="scientific">Shewanella oneidensis (strain ATCC 700550 / JCM 31522 / CIP 106686 / LMG 19005 / NCIMB 14063 / MR-1)</name>
    <dbReference type="NCBI Taxonomy" id="211586"/>
    <lineage>
        <taxon>Bacteria</taxon>
        <taxon>Pseudomonadati</taxon>
        <taxon>Pseudomonadota</taxon>
        <taxon>Gammaproteobacteria</taxon>
        <taxon>Alteromonadales</taxon>
        <taxon>Shewanellaceae</taxon>
        <taxon>Shewanella</taxon>
    </lineage>
</organism>
<proteinExistence type="inferred from homology"/>
<protein>
    <recommendedName>
        <fullName evidence="1">ATP synthase subunit c</fullName>
    </recommendedName>
    <alternativeName>
        <fullName evidence="1">ATP synthase F(0) sector subunit c</fullName>
    </alternativeName>
    <alternativeName>
        <fullName evidence="1">F-type ATPase subunit c</fullName>
        <shortName evidence="1">F-ATPase subunit c</shortName>
    </alternativeName>
    <alternativeName>
        <fullName evidence="1">Lipid-binding protein</fullName>
    </alternativeName>
</protein>
<keyword id="KW-0066">ATP synthesis</keyword>
<keyword id="KW-0997">Cell inner membrane</keyword>
<keyword id="KW-1003">Cell membrane</keyword>
<keyword id="KW-0138">CF(0)</keyword>
<keyword id="KW-0375">Hydrogen ion transport</keyword>
<keyword id="KW-0406">Ion transport</keyword>
<keyword id="KW-0446">Lipid-binding</keyword>
<keyword id="KW-0472">Membrane</keyword>
<keyword id="KW-1185">Reference proteome</keyword>
<keyword id="KW-0812">Transmembrane</keyword>
<keyword id="KW-1133">Transmembrane helix</keyword>
<keyword id="KW-0813">Transport</keyword>
<evidence type="ECO:0000255" key="1">
    <source>
        <dbReference type="HAMAP-Rule" id="MF_01396"/>
    </source>
</evidence>
<name>ATPL_SHEON</name>
<feature type="chain" id="PRO_1000184475" description="ATP synthase subunit c">
    <location>
        <begin position="1"/>
        <end position="83"/>
    </location>
</feature>
<feature type="transmembrane region" description="Helical" evidence="1">
    <location>
        <begin position="10"/>
        <end position="30"/>
    </location>
</feature>
<feature type="transmembrane region" description="Helical" evidence="1">
    <location>
        <begin position="52"/>
        <end position="72"/>
    </location>
</feature>
<feature type="site" description="Reversibly protonated during proton transport" evidence="1">
    <location>
        <position position="60"/>
    </location>
</feature>
<comment type="function">
    <text evidence="1">F(1)F(0) ATP synthase produces ATP from ADP in the presence of a proton or sodium gradient. F-type ATPases consist of two structural domains, F(1) containing the extramembraneous catalytic core and F(0) containing the membrane proton channel, linked together by a central stalk and a peripheral stalk. During catalysis, ATP synthesis in the catalytic domain of F(1) is coupled via a rotary mechanism of the central stalk subunits to proton translocation.</text>
</comment>
<comment type="function">
    <text evidence="1">Key component of the F(0) channel; it plays a direct role in translocation across the membrane. A homomeric c-ring of between 10-14 subunits forms the central stalk rotor element with the F(1) delta and epsilon subunits.</text>
</comment>
<comment type="subunit">
    <text evidence="1">F-type ATPases have 2 components, F(1) - the catalytic core - and F(0) - the membrane proton channel. F(1) has five subunits: alpha(3), beta(3), gamma(1), delta(1), epsilon(1). F(0) has three main subunits: a(1), b(2) and c(10-14). The alpha and beta chains form an alternating ring which encloses part of the gamma chain. F(1) is attached to F(0) by a central stalk formed by the gamma and epsilon chains, while a peripheral stalk is formed by the delta and b chains.</text>
</comment>
<comment type="subcellular location">
    <subcellularLocation>
        <location evidence="1">Cell inner membrane</location>
        <topology evidence="1">Multi-pass membrane protein</topology>
    </subcellularLocation>
</comment>
<comment type="similarity">
    <text evidence="1">Belongs to the ATPase C chain family.</text>
</comment>